<name>YD286_DICDI</name>
<proteinExistence type="inferred from homology"/>
<keyword id="KW-1015">Disulfide bond</keyword>
<keyword id="KW-0249">Electron transport</keyword>
<keyword id="KW-1185">Reference proteome</keyword>
<keyword id="KW-0813">Transport</keyword>
<feature type="chain" id="PRO_0000328759" description="Glutaredoxin-like protein YDR286C homolog">
    <location>
        <begin position="1"/>
        <end position="108"/>
    </location>
</feature>
<feature type="disulfide bond" description="Redox-active" evidence="1">
    <location>
        <begin position="22"/>
        <end position="25"/>
    </location>
</feature>
<protein>
    <recommendedName>
        <fullName>Glutaredoxin-like protein YDR286C homolog</fullName>
    </recommendedName>
</protein>
<dbReference type="EMBL" id="AAFI02000079">
    <property type="protein sequence ID" value="EAL64573.1"/>
    <property type="molecule type" value="Genomic_DNA"/>
</dbReference>
<dbReference type="RefSeq" id="XP_638075.1">
    <property type="nucleotide sequence ID" value="XM_632983.1"/>
</dbReference>
<dbReference type="SMR" id="Q54N68"/>
<dbReference type="STRING" id="44689.Q54N68"/>
<dbReference type="PaxDb" id="44689-DDB0186517"/>
<dbReference type="EnsemblProtists" id="EAL64573">
    <property type="protein sequence ID" value="EAL64573"/>
    <property type="gene ID" value="DDB_G0285471"/>
</dbReference>
<dbReference type="GeneID" id="8625121"/>
<dbReference type="KEGG" id="ddi:DDB_G0285471"/>
<dbReference type="dictyBase" id="DDB_G0285471"/>
<dbReference type="VEuPathDB" id="AmoebaDB:DDB_G0285471"/>
<dbReference type="eggNOG" id="ENOG502RI6I">
    <property type="taxonomic scope" value="Eukaryota"/>
</dbReference>
<dbReference type="HOGENOM" id="CLU_125054_0_0_1"/>
<dbReference type="InParanoid" id="Q54N68"/>
<dbReference type="OMA" id="IRFFSRP"/>
<dbReference type="PhylomeDB" id="Q54N68"/>
<dbReference type="PRO" id="PR:Q54N68"/>
<dbReference type="Proteomes" id="UP000002195">
    <property type="component" value="Chromosome 4"/>
</dbReference>
<dbReference type="Gene3D" id="3.40.30.10">
    <property type="entry name" value="Glutaredoxin"/>
    <property type="match status" value="1"/>
</dbReference>
<dbReference type="InterPro" id="IPR008554">
    <property type="entry name" value="Glutaredoxin-like"/>
</dbReference>
<dbReference type="InterPro" id="IPR052565">
    <property type="entry name" value="Glutaredoxin-like_YDR286C"/>
</dbReference>
<dbReference type="InterPro" id="IPR036249">
    <property type="entry name" value="Thioredoxin-like_sf"/>
</dbReference>
<dbReference type="PANTHER" id="PTHR33558">
    <property type="entry name" value="GLUTAREDOXIN-LIKE PROTEIN C5ORF63 HOMOLOG"/>
    <property type="match status" value="1"/>
</dbReference>
<dbReference type="PANTHER" id="PTHR33558:SF1">
    <property type="entry name" value="GLUTAREDOXIN-LIKE PROTEIN C5ORF63 HOMOLOG"/>
    <property type="match status" value="1"/>
</dbReference>
<dbReference type="Pfam" id="PF05768">
    <property type="entry name" value="Glrx-like"/>
    <property type="match status" value="1"/>
</dbReference>
<dbReference type="SUPFAM" id="SSF52833">
    <property type="entry name" value="Thioredoxin-like"/>
    <property type="match status" value="1"/>
</dbReference>
<organism>
    <name type="scientific">Dictyostelium discoideum</name>
    <name type="common">Social amoeba</name>
    <dbReference type="NCBI Taxonomy" id="44689"/>
    <lineage>
        <taxon>Eukaryota</taxon>
        <taxon>Amoebozoa</taxon>
        <taxon>Evosea</taxon>
        <taxon>Eumycetozoa</taxon>
        <taxon>Dictyostelia</taxon>
        <taxon>Dictyosteliales</taxon>
        <taxon>Dictyosteliaceae</taxon>
        <taxon>Dictyostelium</taxon>
    </lineage>
</organism>
<accession>Q54N68</accession>
<evidence type="ECO:0000250" key="1"/>
<evidence type="ECO:0000305" key="2"/>
<sequence length="108" mass="13026">MLTKILNNFKSINIRFFTRPGCSLCQSAKEIIYPAVEEDFPTNRFTIEEIDIDKENNKQYFDKFKNDVPVGMIDQKIIFKHRIDEDKLYYDLETILRQQIKKEKEEKE</sequence>
<reference key="1">
    <citation type="journal article" date="2005" name="Nature">
        <title>The genome of the social amoeba Dictyostelium discoideum.</title>
        <authorList>
            <person name="Eichinger L."/>
            <person name="Pachebat J.A."/>
            <person name="Gloeckner G."/>
            <person name="Rajandream M.A."/>
            <person name="Sucgang R."/>
            <person name="Berriman M."/>
            <person name="Song J."/>
            <person name="Olsen R."/>
            <person name="Szafranski K."/>
            <person name="Xu Q."/>
            <person name="Tunggal B."/>
            <person name="Kummerfeld S."/>
            <person name="Madera M."/>
            <person name="Konfortov B.A."/>
            <person name="Rivero F."/>
            <person name="Bankier A.T."/>
            <person name="Lehmann R."/>
            <person name="Hamlin N."/>
            <person name="Davies R."/>
            <person name="Gaudet P."/>
            <person name="Fey P."/>
            <person name="Pilcher K."/>
            <person name="Chen G."/>
            <person name="Saunders D."/>
            <person name="Sodergren E.J."/>
            <person name="Davis P."/>
            <person name="Kerhornou A."/>
            <person name="Nie X."/>
            <person name="Hall N."/>
            <person name="Anjard C."/>
            <person name="Hemphill L."/>
            <person name="Bason N."/>
            <person name="Farbrother P."/>
            <person name="Desany B."/>
            <person name="Just E."/>
            <person name="Morio T."/>
            <person name="Rost R."/>
            <person name="Churcher C.M."/>
            <person name="Cooper J."/>
            <person name="Haydock S."/>
            <person name="van Driessche N."/>
            <person name="Cronin A."/>
            <person name="Goodhead I."/>
            <person name="Muzny D.M."/>
            <person name="Mourier T."/>
            <person name="Pain A."/>
            <person name="Lu M."/>
            <person name="Harper D."/>
            <person name="Lindsay R."/>
            <person name="Hauser H."/>
            <person name="James K.D."/>
            <person name="Quiles M."/>
            <person name="Madan Babu M."/>
            <person name="Saito T."/>
            <person name="Buchrieser C."/>
            <person name="Wardroper A."/>
            <person name="Felder M."/>
            <person name="Thangavelu M."/>
            <person name="Johnson D."/>
            <person name="Knights A."/>
            <person name="Loulseged H."/>
            <person name="Mungall K.L."/>
            <person name="Oliver K."/>
            <person name="Price C."/>
            <person name="Quail M.A."/>
            <person name="Urushihara H."/>
            <person name="Hernandez J."/>
            <person name="Rabbinowitsch E."/>
            <person name="Steffen D."/>
            <person name="Sanders M."/>
            <person name="Ma J."/>
            <person name="Kohara Y."/>
            <person name="Sharp S."/>
            <person name="Simmonds M.N."/>
            <person name="Spiegler S."/>
            <person name="Tivey A."/>
            <person name="Sugano S."/>
            <person name="White B."/>
            <person name="Walker D."/>
            <person name="Woodward J.R."/>
            <person name="Winckler T."/>
            <person name="Tanaka Y."/>
            <person name="Shaulsky G."/>
            <person name="Schleicher M."/>
            <person name="Weinstock G.M."/>
            <person name="Rosenthal A."/>
            <person name="Cox E.C."/>
            <person name="Chisholm R.L."/>
            <person name="Gibbs R.A."/>
            <person name="Loomis W.F."/>
            <person name="Platzer M."/>
            <person name="Kay R.R."/>
            <person name="Williams J.G."/>
            <person name="Dear P.H."/>
            <person name="Noegel A.A."/>
            <person name="Barrell B.G."/>
            <person name="Kuspa A."/>
        </authorList>
    </citation>
    <scope>NUCLEOTIDE SEQUENCE [LARGE SCALE GENOMIC DNA]</scope>
    <source>
        <strain>AX4</strain>
    </source>
</reference>
<comment type="similarity">
    <text evidence="2">Belongs to the glutaredoxin family. YDR286C subfamily.</text>
</comment>
<gene>
    <name type="ORF">DDB_G0285471</name>
</gene>